<gene>
    <name evidence="6" type="primary">aflU</name>
    <name evidence="7" type="synonym">cypA</name>
    <name type="ORF">P875_00052986-1</name>
</gene>
<dbReference type="EC" id="1.-.-.-" evidence="9"/>
<dbReference type="EMBL" id="AY371490">
    <property type="protein sequence ID" value="AAS66021.1"/>
    <property type="molecule type" value="Genomic_DNA"/>
</dbReference>
<dbReference type="EMBL" id="JZEE01000728">
    <property type="protein sequence ID" value="KJK60792.1"/>
    <property type="status" value="ALT_SEQ"/>
    <property type="molecule type" value="Genomic_DNA"/>
</dbReference>
<dbReference type="SMR" id="Q6UEH4"/>
<dbReference type="STRING" id="1403190.Q6UEH4"/>
<dbReference type="GlyCosmos" id="Q6UEH4">
    <property type="glycosylation" value="2 sites, No reported glycans"/>
</dbReference>
<dbReference type="OrthoDB" id="10021397at2759"/>
<dbReference type="UniPathway" id="UPA00287"/>
<dbReference type="Proteomes" id="UP000033540">
    <property type="component" value="Unassembled WGS sequence"/>
</dbReference>
<dbReference type="GO" id="GO:0016020">
    <property type="term" value="C:membrane"/>
    <property type="evidence" value="ECO:0007669"/>
    <property type="project" value="UniProtKB-SubCell"/>
</dbReference>
<dbReference type="GO" id="GO:0020037">
    <property type="term" value="F:heme binding"/>
    <property type="evidence" value="ECO:0007669"/>
    <property type="project" value="InterPro"/>
</dbReference>
<dbReference type="GO" id="GO:0005506">
    <property type="term" value="F:iron ion binding"/>
    <property type="evidence" value="ECO:0007669"/>
    <property type="project" value="InterPro"/>
</dbReference>
<dbReference type="GO" id="GO:0004497">
    <property type="term" value="F:monooxygenase activity"/>
    <property type="evidence" value="ECO:0007669"/>
    <property type="project" value="UniProtKB-KW"/>
</dbReference>
<dbReference type="GO" id="GO:0016705">
    <property type="term" value="F:oxidoreductase activity, acting on paired donors, with incorporation or reduction of molecular oxygen"/>
    <property type="evidence" value="ECO:0007669"/>
    <property type="project" value="InterPro"/>
</dbReference>
<dbReference type="GO" id="GO:0045122">
    <property type="term" value="P:aflatoxin biosynthetic process"/>
    <property type="evidence" value="ECO:0000315"/>
    <property type="project" value="GO_Central"/>
</dbReference>
<dbReference type="CDD" id="cd11062">
    <property type="entry name" value="CYP58-like"/>
    <property type="match status" value="1"/>
</dbReference>
<dbReference type="Gene3D" id="1.10.630.10">
    <property type="entry name" value="Cytochrome P450"/>
    <property type="match status" value="1"/>
</dbReference>
<dbReference type="InterPro" id="IPR001128">
    <property type="entry name" value="Cyt_P450"/>
</dbReference>
<dbReference type="InterPro" id="IPR017972">
    <property type="entry name" value="Cyt_P450_CS"/>
</dbReference>
<dbReference type="InterPro" id="IPR002401">
    <property type="entry name" value="Cyt_P450_E_grp-I"/>
</dbReference>
<dbReference type="InterPro" id="IPR036396">
    <property type="entry name" value="Cyt_P450_sf"/>
</dbReference>
<dbReference type="InterPro" id="IPR050121">
    <property type="entry name" value="Cytochrome_P450_monoxygenase"/>
</dbReference>
<dbReference type="PANTHER" id="PTHR24305">
    <property type="entry name" value="CYTOCHROME P450"/>
    <property type="match status" value="1"/>
</dbReference>
<dbReference type="PANTHER" id="PTHR24305:SF157">
    <property type="entry name" value="N-ACETYLTRYPTOPHAN 6-HYDROXYLASE IVOC-RELATED"/>
    <property type="match status" value="1"/>
</dbReference>
<dbReference type="Pfam" id="PF00067">
    <property type="entry name" value="p450"/>
    <property type="match status" value="1"/>
</dbReference>
<dbReference type="PRINTS" id="PR00463">
    <property type="entry name" value="EP450I"/>
</dbReference>
<dbReference type="PRINTS" id="PR00385">
    <property type="entry name" value="P450"/>
</dbReference>
<dbReference type="SUPFAM" id="SSF48264">
    <property type="entry name" value="Cytochrome P450"/>
    <property type="match status" value="1"/>
</dbReference>
<dbReference type="PROSITE" id="PS00086">
    <property type="entry name" value="CYTOCHROME_P450"/>
    <property type="match status" value="1"/>
</dbReference>
<name>AFLU_ASPPU</name>
<protein>
    <recommendedName>
        <fullName evidence="6">Cytochrome P450 monooxygenase aflU</fullName>
        <ecNumber evidence="9">1.-.-.-</ecNumber>
    </recommendedName>
    <alternativeName>
        <fullName evidence="6">Aflatoxin biosynthesis protein U</fullName>
    </alternativeName>
</protein>
<accession>Q6UEH4</accession>
<accession>A0A0F0I2C7</accession>
<organism>
    <name type="scientific">Aspergillus parasiticus (strain ATCC 56775 / NRRL 5862 / SRRC 143 / SU-1)</name>
    <dbReference type="NCBI Taxonomy" id="1403190"/>
    <lineage>
        <taxon>Eukaryota</taxon>
        <taxon>Fungi</taxon>
        <taxon>Dikarya</taxon>
        <taxon>Ascomycota</taxon>
        <taxon>Pezizomycotina</taxon>
        <taxon>Eurotiomycetes</taxon>
        <taxon>Eurotiomycetidae</taxon>
        <taxon>Eurotiales</taxon>
        <taxon>Aspergillaceae</taxon>
        <taxon>Aspergillus</taxon>
        <taxon>Aspergillus subgen. Circumdati</taxon>
    </lineage>
</organism>
<proteinExistence type="inferred from homology"/>
<comment type="function">
    <text evidence="4 5 9 10">Cytochrome P450 monooxygenase; part of the gene cluster that mediates the biosynthesis of aflatoxins, a group of polyketide-derived furanocoumarins, and part of the most toxic and carcinogenic compounds among the known mycotoxins (PubMed:11996570, PubMed:15006741, PubMed:15094053, PubMed:15528514). The four major aflatoxins produced by A.parasiticus are aflatoxin B1 (AFB1), aflatoxin B2 (AFB2), aflatoxin G1 (AFG1) and aflatoxin G2 (AFG2) (PubMed:15006741). Within the aflatoxin pathway, the cytochrome P450 monooxygenase aflU is involved in the last steps in which OMST is converted to aflatoxins B1 and G1, and DHOMST to aflatoxins B2 and G2 (PubMed:11996570, PubMed:15006741, PubMed:15528514). The biosynthesis of aflatoxins begins with the norsolorinic acid synthase aflC that combines a hexanoyl starter unit produced by the fatty acid synthase aflA/aflB and 7 malonyl-CoA extender units to synthesize the precursor NOR. The second step is the conversion of NOR to averantin and requires the norsolorinic acid ketoreductase aflD, which catalyzes the dehydration of norsolorinic acid to form (1'S)-averantin. The norsolorinic acid reductases aflE and aflF may also play a role in the conversion of NOR to AVN. The cytochrome P450 monooxygenase aflG then catalyzes the hydroxylation of AVN to 5'hydroxyaverantin (HAVN). The next step is performed by the 5'-hydroxyaverantin dehydrogenase aflH that transforms HAVN to 5'-oxoaverantin (OAVN) which is further converted to averufin (AVF) by aflK that plays a dual role in the pathway, as a 5'-oxoaverantin cyclase that mediates conversion of 5'-oxoaverantin, as well as a versicolorin B synthase in a later step in the pathway. The averufin oxidase aflI catalyzes the conversion of AVF to versiconal hemiacetal acetate (VHA). VHA is then the substrate for the versiconal hemiacetal acetate esterase aflJ to yield versiconal (VAL). Versicolorin B synthase aflK then converts VAL to versicolorin B (VERB) by closing the bisfuran ring of aflatoxin which is required for DNA-binding, thus giving to aflatoxin its activity as a mutagen. Then, the activity of the versicolorin B desaturase aflL leads to versicolorin A (VERA). A branch point starts from VERB since it can also be converted to dihydrodemethylsterigmatocystin (DMDHST), probably also by aflL, VERA being a precursor for aflatoxins B1 and G1, and DMDHST for aflatoxins B2 and G2. Next, the versicolorin reductase aflM and the cytochrome P450 monooxygenase aflN are involved in conversion of VERA to demethylsterigmatocystin (DMST). AflX and aflY seem also involved in this step, through probable aflX-mediated epoxide ring-opening step following versicolorin A oxidation and aflY-mediated Baeyer-Villiger oxidation required for the formation of the xanthone ring. The methyltransferase aflO then leads to the modification of DMST to sterigmatocystin (ST), and of DMDHST to dihydrosterigmatocystin (DHST). Both ST and DHST are then substrates of the O-methyltransferase aflP to yield O-methylsterigmatocystin (OMST) and dihydro-O-methylsterigmatocystin (DHOMST), respectively. Finally OMST is converted to aflatoxins B1 and G1, and DHOMST to aflatoxins B2 and G2, via the action of several enzymes including O-methylsterigmatocystin oxidoreductase aflQ, the cytochrome P450 monooxygenase aflU, but also the NADH-dependent flavin oxidoreductase nadA which is specifically required for the synthesis of AFG1 (PubMed:15006741).</text>
</comment>
<comment type="cofactor">
    <cofactor evidence="1">
        <name>heme</name>
        <dbReference type="ChEBI" id="CHEBI:30413"/>
    </cofactor>
</comment>
<comment type="pathway">
    <text evidence="9 10">Mycotoxin biosynthesis; aflatoxin biosynthesis.</text>
</comment>
<comment type="subcellular location">
    <subcellularLocation>
        <location evidence="2">Membrane</location>
        <topology evidence="2">Single-pass membrane protein</topology>
    </subcellularLocation>
</comment>
<comment type="disruption phenotype">
    <text evidence="5">Abolishes the ability to produce G aflatoxins but not B aflatoxins (PubMed:15528514).</text>
</comment>
<comment type="similarity">
    <text evidence="8">Belongs to the cytochrome P450 family.</text>
</comment>
<comment type="sequence caution" evidence="8">
    <conflict type="erroneous gene model prediction">
        <sequence resource="EMBL-CDS" id="KJK60792"/>
    </conflict>
    <text>The predicted gene P875_00052986 has been split into 2 genes: P875_00052986-1 (aflU) and P875_00052986-2 (aflT).</text>
</comment>
<feature type="chain" id="PRO_0000438341" description="Cytochrome P450 monooxygenase aflU">
    <location>
        <begin position="1"/>
        <end position="498"/>
    </location>
</feature>
<feature type="transmembrane region" description="Helical" evidence="2">
    <location>
        <begin position="5"/>
        <end position="27"/>
    </location>
</feature>
<feature type="binding site" description="axial binding residue" evidence="1">
    <location>
        <position position="438"/>
    </location>
    <ligand>
        <name>heme</name>
        <dbReference type="ChEBI" id="CHEBI:30413"/>
    </ligand>
    <ligandPart>
        <name>Fe</name>
        <dbReference type="ChEBI" id="CHEBI:18248"/>
    </ligandPart>
</feature>
<feature type="glycosylation site" description="N-linked (GlcNAc...) asparagine" evidence="3">
    <location>
        <position position="259"/>
    </location>
</feature>
<feature type="glycosylation site" description="N-linked (GlcNAc...) asparagine" evidence="3">
    <location>
        <position position="354"/>
    </location>
</feature>
<keyword id="KW-0325">Glycoprotein</keyword>
<keyword id="KW-0349">Heme</keyword>
<keyword id="KW-0408">Iron</keyword>
<keyword id="KW-0472">Membrane</keyword>
<keyword id="KW-0479">Metal-binding</keyword>
<keyword id="KW-0503">Monooxygenase</keyword>
<keyword id="KW-0560">Oxidoreductase</keyword>
<keyword id="KW-1185">Reference proteome</keyword>
<keyword id="KW-0812">Transmembrane</keyword>
<keyword id="KW-1133">Transmembrane helix</keyword>
<reference key="1">
    <citation type="journal article" date="2004" name="Appl. Environ. Microbiol.">
        <title>Clustered pathway genes in aflatoxin biosynthesis.</title>
        <authorList>
            <person name="Yu J."/>
            <person name="Chang P.K."/>
            <person name="Ehrlich K.C."/>
            <person name="Cary J.W."/>
            <person name="Bhatnagar D."/>
            <person name="Cleveland T.E."/>
            <person name="Payne G.A."/>
            <person name="Linz J.E."/>
            <person name="Woloshuk C.P."/>
            <person name="Bennett J.W."/>
        </authorList>
    </citation>
    <scope>NUCLEOTIDE SEQUENCE [GENOMIC DNA]</scope>
    <scope>FUNCTION</scope>
    <scope>PATHWAY</scope>
    <scope>NOMENCLATURE</scope>
    <source>
        <strain>ATCC 56775 / NRRL 5862 / SRRC 143 / SU-1</strain>
    </source>
</reference>
<reference key="2">
    <citation type="journal article" date="2004" name="FEBS Lett.">
        <title>Completed sequence of aflatoxin pathway gene cluster in Aspergillus parasiticus.</title>
        <authorList>
            <person name="Yu J."/>
            <person name="Bhatnagar D."/>
            <person name="Cleveland T.E."/>
        </authorList>
    </citation>
    <scope>NUCLEOTIDE SEQUENCE [GENOMIC DNA]</scope>
    <scope>FUNCTION</scope>
    <scope>PATHWAY</scope>
    <source>
        <strain>ATCC 56775 / NRRL 5862 / SRRC 143 / SU-1</strain>
    </source>
</reference>
<reference key="3">
    <citation type="submission" date="2015-02" db="EMBL/GenBank/DDBJ databases">
        <title>Draft genome sequence of Aspergillus parasiticus SU-1.</title>
        <authorList>
            <person name="Yu J."/>
            <person name="Fedorova N."/>
            <person name="Yin Y."/>
            <person name="Losada L."/>
            <person name="Zafar N."/>
            <person name="Taujale R."/>
            <person name="Ehrlich K.C."/>
            <person name="Bhatnagar D."/>
            <person name="Cleveland T.E."/>
            <person name="Bennett J.W."/>
            <person name="Nierman W.C."/>
        </authorList>
    </citation>
    <scope>NUCLEOTIDE SEQUENCE [LARGE SCALE GENOMIC DNA]</scope>
    <source>
        <strain>ATCC 56775 / NRRL 5862 / SRRC 143 / SU-1</strain>
    </source>
</reference>
<reference key="4">
    <citation type="journal article" date="2002" name="J. Am. Chem. Soc.">
        <title>Synthesis of 11-hydroxyl O-methylsterigmatocystin and the role of a cytochrome P-450 in the final step of aflatoxin biosynthesis.</title>
        <authorList>
            <person name="Udwary D.W."/>
            <person name="Casillas L.K."/>
            <person name="Townsend C.A."/>
        </authorList>
    </citation>
    <scope>FUNCTION</scope>
</reference>
<reference key="5">
    <citation type="journal article" date="2004" name="Appl. Environ. Microbiol.">
        <title>Aflatoxin biosynthesis cluster gene cypA is required for G aflatoxin formation.</title>
        <authorList>
            <person name="Ehrlich K.C."/>
            <person name="Chang P.K."/>
            <person name="Yu J."/>
            <person name="Cotty P.J."/>
        </authorList>
    </citation>
    <scope>FUNCTION</scope>
    <scope>DISRUPTION PHENOTYPE</scope>
</reference>
<evidence type="ECO:0000250" key="1">
    <source>
        <dbReference type="UniProtKB" id="P04798"/>
    </source>
</evidence>
<evidence type="ECO:0000255" key="2"/>
<evidence type="ECO:0000255" key="3">
    <source>
        <dbReference type="PROSITE-ProRule" id="PRU00498"/>
    </source>
</evidence>
<evidence type="ECO:0000269" key="4">
    <source>
    </source>
</evidence>
<evidence type="ECO:0000269" key="5">
    <source>
    </source>
</evidence>
<evidence type="ECO:0000303" key="6">
    <source>
    </source>
</evidence>
<evidence type="ECO:0000303" key="7">
    <source>
    </source>
</evidence>
<evidence type="ECO:0000305" key="8"/>
<evidence type="ECO:0000305" key="9">
    <source>
    </source>
</evidence>
<evidence type="ECO:0000305" key="10">
    <source>
    </source>
</evidence>
<sequence>MASNTVYTSLIGLLVALTVRSIYRVYFHPLRKIPGPKIAAITHLYQHYYDAVKGGKYIWKLDELHRKYGPIVRFNPNEVHIQDSHYYHHIYAGGAKKQDKDPGFPAVPLFPGVTVTTIKHNHHRLRRGIIKSFFSKQYVTGLEHVIQSKVNLLASRFTEAYRHGTVLDLKYVFAALTSDLTTHYVYGTNLNHLAEPDFKNDFLAGMDSVGPWIPVLLVFGRLLKLARYLPACLVPAGEFLHLWTLSERRVGEILDSQDNGTMGDQKTLLQAMATADVSEEEKTATRLQMETLNIIAGGTETTARALAVGVFHLAHKPSLLLQLRDELRTVMPFPDSSASWTQLEQLPYLAGVVNESLRLSFGFIIRSARVYPNDPLVYEDLVIPPGTPISQSAYFVCMDPSIFPQPEDFNPDRWVQAAREGNNLHRYLIVFSKGSRHCLGINFALAEIYLAIATIARRFDLVPYQTTVEQLQMKRDLGFAAPEKGPFTVRAKVTGLAD</sequence>